<name>HEMH_GEOUR</name>
<keyword id="KW-0963">Cytoplasm</keyword>
<keyword id="KW-0350">Heme biosynthesis</keyword>
<keyword id="KW-0408">Iron</keyword>
<keyword id="KW-0456">Lyase</keyword>
<keyword id="KW-0479">Metal-binding</keyword>
<keyword id="KW-0627">Porphyrin biosynthesis</keyword>
<keyword id="KW-1185">Reference proteome</keyword>
<protein>
    <recommendedName>
        <fullName evidence="1">Ferrochelatase</fullName>
        <ecNumber evidence="1">4.98.1.1</ecNumber>
    </recommendedName>
    <alternativeName>
        <fullName evidence="1">Heme synthase</fullName>
    </alternativeName>
    <alternativeName>
        <fullName evidence="1">Protoheme ferro-lyase</fullName>
    </alternativeName>
</protein>
<proteinExistence type="inferred from homology"/>
<organism>
    <name type="scientific">Geotalea uraniireducens (strain Rf4)</name>
    <name type="common">Geobacter uraniireducens</name>
    <dbReference type="NCBI Taxonomy" id="351605"/>
    <lineage>
        <taxon>Bacteria</taxon>
        <taxon>Pseudomonadati</taxon>
        <taxon>Thermodesulfobacteriota</taxon>
        <taxon>Desulfuromonadia</taxon>
        <taxon>Geobacterales</taxon>
        <taxon>Geobacteraceae</taxon>
        <taxon>Geotalea</taxon>
    </lineage>
</organism>
<comment type="function">
    <text evidence="1">Catalyzes the ferrous insertion into protoporphyrin IX.</text>
</comment>
<comment type="catalytic activity">
    <reaction evidence="1">
        <text>heme b + 2 H(+) = protoporphyrin IX + Fe(2+)</text>
        <dbReference type="Rhea" id="RHEA:22584"/>
        <dbReference type="ChEBI" id="CHEBI:15378"/>
        <dbReference type="ChEBI" id="CHEBI:29033"/>
        <dbReference type="ChEBI" id="CHEBI:57306"/>
        <dbReference type="ChEBI" id="CHEBI:60344"/>
        <dbReference type="EC" id="4.98.1.1"/>
    </reaction>
</comment>
<comment type="pathway">
    <text evidence="1">Porphyrin-containing compound metabolism; protoheme biosynthesis; protoheme from protoporphyrin-IX: step 1/1.</text>
</comment>
<comment type="subcellular location">
    <subcellularLocation>
        <location evidence="1">Cytoplasm</location>
    </subcellularLocation>
</comment>
<comment type="similarity">
    <text evidence="1">Belongs to the ferrochelatase family.</text>
</comment>
<dbReference type="EC" id="4.98.1.1" evidence="1"/>
<dbReference type="EMBL" id="CP000698">
    <property type="protein sequence ID" value="ABQ24389.1"/>
    <property type="molecule type" value="Genomic_DNA"/>
</dbReference>
<dbReference type="RefSeq" id="WP_011937118.1">
    <property type="nucleotide sequence ID" value="NC_009483.1"/>
</dbReference>
<dbReference type="SMR" id="A5GDG7"/>
<dbReference type="STRING" id="351605.Gura_0173"/>
<dbReference type="KEGG" id="gur:Gura_0173"/>
<dbReference type="HOGENOM" id="CLU_018884_4_1_7"/>
<dbReference type="OrthoDB" id="9809741at2"/>
<dbReference type="UniPathway" id="UPA00252">
    <property type="reaction ID" value="UER00325"/>
</dbReference>
<dbReference type="Proteomes" id="UP000006695">
    <property type="component" value="Chromosome"/>
</dbReference>
<dbReference type="GO" id="GO:0005737">
    <property type="term" value="C:cytoplasm"/>
    <property type="evidence" value="ECO:0007669"/>
    <property type="project" value="UniProtKB-SubCell"/>
</dbReference>
<dbReference type="GO" id="GO:0004325">
    <property type="term" value="F:ferrochelatase activity"/>
    <property type="evidence" value="ECO:0007669"/>
    <property type="project" value="UniProtKB-UniRule"/>
</dbReference>
<dbReference type="GO" id="GO:0046872">
    <property type="term" value="F:metal ion binding"/>
    <property type="evidence" value="ECO:0007669"/>
    <property type="project" value="UniProtKB-KW"/>
</dbReference>
<dbReference type="GO" id="GO:0006783">
    <property type="term" value="P:heme biosynthetic process"/>
    <property type="evidence" value="ECO:0007669"/>
    <property type="project" value="UniProtKB-UniRule"/>
</dbReference>
<dbReference type="CDD" id="cd00419">
    <property type="entry name" value="Ferrochelatase_C"/>
    <property type="match status" value="1"/>
</dbReference>
<dbReference type="CDD" id="cd03411">
    <property type="entry name" value="Ferrochelatase_N"/>
    <property type="match status" value="1"/>
</dbReference>
<dbReference type="FunFam" id="3.40.50.1400:FF:000007">
    <property type="entry name" value="Ferrochelatase"/>
    <property type="match status" value="1"/>
</dbReference>
<dbReference type="Gene3D" id="3.40.50.1400">
    <property type="match status" value="2"/>
</dbReference>
<dbReference type="HAMAP" id="MF_00323">
    <property type="entry name" value="Ferrochelatase"/>
    <property type="match status" value="1"/>
</dbReference>
<dbReference type="InterPro" id="IPR001015">
    <property type="entry name" value="Ferrochelatase"/>
</dbReference>
<dbReference type="InterPro" id="IPR019772">
    <property type="entry name" value="Ferrochelatase_AS"/>
</dbReference>
<dbReference type="InterPro" id="IPR033644">
    <property type="entry name" value="Ferrochelatase_C"/>
</dbReference>
<dbReference type="InterPro" id="IPR033659">
    <property type="entry name" value="Ferrochelatase_N"/>
</dbReference>
<dbReference type="NCBIfam" id="TIGR00109">
    <property type="entry name" value="hemH"/>
    <property type="match status" value="1"/>
</dbReference>
<dbReference type="PANTHER" id="PTHR11108">
    <property type="entry name" value="FERROCHELATASE"/>
    <property type="match status" value="1"/>
</dbReference>
<dbReference type="PANTHER" id="PTHR11108:SF1">
    <property type="entry name" value="FERROCHELATASE, MITOCHONDRIAL"/>
    <property type="match status" value="1"/>
</dbReference>
<dbReference type="Pfam" id="PF00762">
    <property type="entry name" value="Ferrochelatase"/>
    <property type="match status" value="1"/>
</dbReference>
<dbReference type="SUPFAM" id="SSF53800">
    <property type="entry name" value="Chelatase"/>
    <property type="match status" value="1"/>
</dbReference>
<dbReference type="PROSITE" id="PS00534">
    <property type="entry name" value="FERROCHELATASE"/>
    <property type="match status" value="1"/>
</dbReference>
<gene>
    <name evidence="1" type="primary">hemH</name>
    <name type="ordered locus">Gura_0173</name>
</gene>
<reference key="1">
    <citation type="submission" date="2007-05" db="EMBL/GenBank/DDBJ databases">
        <title>Complete sequence of Geobacter uraniireducens Rf4.</title>
        <authorList>
            <consortium name="US DOE Joint Genome Institute"/>
            <person name="Copeland A."/>
            <person name="Lucas S."/>
            <person name="Lapidus A."/>
            <person name="Barry K."/>
            <person name="Detter J.C."/>
            <person name="Glavina del Rio T."/>
            <person name="Hammon N."/>
            <person name="Israni S."/>
            <person name="Dalin E."/>
            <person name="Tice H."/>
            <person name="Pitluck S."/>
            <person name="Chertkov O."/>
            <person name="Brettin T."/>
            <person name="Bruce D."/>
            <person name="Han C."/>
            <person name="Schmutz J."/>
            <person name="Larimer F."/>
            <person name="Land M."/>
            <person name="Hauser L."/>
            <person name="Kyrpides N."/>
            <person name="Mikhailova N."/>
            <person name="Shelobolina E."/>
            <person name="Aklujkar M."/>
            <person name="Lovley D."/>
            <person name="Richardson P."/>
        </authorList>
    </citation>
    <scope>NUCLEOTIDE SEQUENCE [LARGE SCALE GENOMIC DNA]</scope>
    <source>
        <strain>ATCC BAA-1134 / JCM 13001 / Rf4</strain>
    </source>
</reference>
<feature type="chain" id="PRO_1000079196" description="Ferrochelatase">
    <location>
        <begin position="1"/>
        <end position="319"/>
    </location>
</feature>
<feature type="binding site" evidence="1">
    <location>
        <position position="192"/>
    </location>
    <ligand>
        <name>Fe cation</name>
        <dbReference type="ChEBI" id="CHEBI:24875"/>
    </ligand>
</feature>
<feature type="binding site" evidence="1">
    <location>
        <position position="271"/>
    </location>
    <ligand>
        <name>Fe cation</name>
        <dbReference type="ChEBI" id="CHEBI:24875"/>
    </ligand>
</feature>
<sequence>MPEKTAVLLLQMGGPDSIEAVEPFLLNLFSDREIIKIGPAFLQPFIARRICRKRAPKVEGYYSQIGGKSPIRELTEAQAQALEEKLGGNFRCFVAMRYWKPTTIDALAAIKREGISRVIALSLYPHYSRATTGSSINELKRVLGEAGARFEVSYVDRFYDHPLYIAALAAKIEEGLAQFSNRSEVELVFSAHSLPQSFIDEGDPYLSHILETVRLVMERLGNVNYHLAFQSRAGPVKWLEPSTEEMIQKLAKGGCKELLMVPLSFVSDHIETLYEIDIQYAEEAKGLGIEHFRRSPSLNTSPLFIDCLANLVHKTVSSE</sequence>
<evidence type="ECO:0000255" key="1">
    <source>
        <dbReference type="HAMAP-Rule" id="MF_00323"/>
    </source>
</evidence>
<accession>A5GDG7</accession>